<name>ARLY_POLAQ</name>
<sequence length="472" mass="52030">MSSSKNSLANKAQAWSARFTEPVDELVQRYTASIGFDQRFAMVDIAGSLAHAEMLATQKIISAQDLADIQKGMAQIKSEIEAGQFEWQLALEDVHLNIEARLTQLVGDAGKRLHTGRSRNDQVATDLRLWLRASVDDISVTLKSLRIALLDLAEKHASTIMPGHTHLQVAQPITFGHHLMAYYEMFSRDASRLVDLRARFNRLPLGAAALAGTTYPIDREQVARILGFDGICNNSLDAVSDRDFAIEFCAFSSILMMHVSRLSEELVLWLSPRFGFIDLPDRFCTGSSIMPQKKNPDVPELARGKTGRVYGDLISLLTLMKSQPLAYNKDNQEDKEPLFDAVDTVQDTLRIFADMVPHIEVKAEVMKAAAEEGFATATDLADYLVKKGLAFRDAHEAVAHAVKACVGRNCMLTDLSLAELRFACGLDNRPELMSDDVFALLTVDGSVQSRQHAGGTAPAQVLAAIKRARTDL</sequence>
<dbReference type="EC" id="4.3.2.1" evidence="1"/>
<dbReference type="EMBL" id="CP000655">
    <property type="protein sequence ID" value="ABP33873.1"/>
    <property type="molecule type" value="Genomic_DNA"/>
</dbReference>
<dbReference type="RefSeq" id="WP_011902498.1">
    <property type="nucleotide sequence ID" value="NC_009379.1"/>
</dbReference>
<dbReference type="SMR" id="A4SWK9"/>
<dbReference type="GeneID" id="31481012"/>
<dbReference type="KEGG" id="pnu:Pnuc_0655"/>
<dbReference type="eggNOG" id="COG0165">
    <property type="taxonomic scope" value="Bacteria"/>
</dbReference>
<dbReference type="HOGENOM" id="CLU_027272_2_3_4"/>
<dbReference type="UniPathway" id="UPA00068">
    <property type="reaction ID" value="UER00114"/>
</dbReference>
<dbReference type="Proteomes" id="UP000000231">
    <property type="component" value="Chromosome"/>
</dbReference>
<dbReference type="GO" id="GO:0005829">
    <property type="term" value="C:cytosol"/>
    <property type="evidence" value="ECO:0007669"/>
    <property type="project" value="TreeGrafter"/>
</dbReference>
<dbReference type="GO" id="GO:0004056">
    <property type="term" value="F:argininosuccinate lyase activity"/>
    <property type="evidence" value="ECO:0007669"/>
    <property type="project" value="UniProtKB-UniRule"/>
</dbReference>
<dbReference type="GO" id="GO:0042450">
    <property type="term" value="P:arginine biosynthetic process via ornithine"/>
    <property type="evidence" value="ECO:0007669"/>
    <property type="project" value="InterPro"/>
</dbReference>
<dbReference type="GO" id="GO:0006526">
    <property type="term" value="P:L-arginine biosynthetic process"/>
    <property type="evidence" value="ECO:0007669"/>
    <property type="project" value="UniProtKB-UniRule"/>
</dbReference>
<dbReference type="CDD" id="cd01359">
    <property type="entry name" value="Argininosuccinate_lyase"/>
    <property type="match status" value="1"/>
</dbReference>
<dbReference type="FunFam" id="1.10.275.10:FF:000002">
    <property type="entry name" value="Argininosuccinate lyase"/>
    <property type="match status" value="1"/>
</dbReference>
<dbReference type="FunFam" id="1.10.40.30:FF:000001">
    <property type="entry name" value="Argininosuccinate lyase"/>
    <property type="match status" value="1"/>
</dbReference>
<dbReference type="FunFam" id="1.20.200.10:FF:000015">
    <property type="entry name" value="argininosuccinate lyase isoform X2"/>
    <property type="match status" value="1"/>
</dbReference>
<dbReference type="Gene3D" id="1.10.40.30">
    <property type="entry name" value="Fumarase/aspartase (C-terminal domain)"/>
    <property type="match status" value="1"/>
</dbReference>
<dbReference type="Gene3D" id="1.20.200.10">
    <property type="entry name" value="Fumarase/aspartase (Central domain)"/>
    <property type="match status" value="1"/>
</dbReference>
<dbReference type="Gene3D" id="1.10.275.10">
    <property type="entry name" value="Fumarase/aspartase (N-terminal domain)"/>
    <property type="match status" value="1"/>
</dbReference>
<dbReference type="HAMAP" id="MF_00006">
    <property type="entry name" value="Arg_succ_lyase"/>
    <property type="match status" value="1"/>
</dbReference>
<dbReference type="InterPro" id="IPR029419">
    <property type="entry name" value="Arg_succ_lyase_C"/>
</dbReference>
<dbReference type="InterPro" id="IPR009049">
    <property type="entry name" value="Argininosuccinate_lyase"/>
</dbReference>
<dbReference type="InterPro" id="IPR024083">
    <property type="entry name" value="Fumarase/histidase_N"/>
</dbReference>
<dbReference type="InterPro" id="IPR020557">
    <property type="entry name" value="Fumarate_lyase_CS"/>
</dbReference>
<dbReference type="InterPro" id="IPR000362">
    <property type="entry name" value="Fumarate_lyase_fam"/>
</dbReference>
<dbReference type="InterPro" id="IPR022761">
    <property type="entry name" value="Fumarate_lyase_N"/>
</dbReference>
<dbReference type="InterPro" id="IPR008948">
    <property type="entry name" value="L-Aspartase-like"/>
</dbReference>
<dbReference type="NCBIfam" id="TIGR00838">
    <property type="entry name" value="argH"/>
    <property type="match status" value="1"/>
</dbReference>
<dbReference type="PANTHER" id="PTHR43814">
    <property type="entry name" value="ARGININOSUCCINATE LYASE"/>
    <property type="match status" value="1"/>
</dbReference>
<dbReference type="PANTHER" id="PTHR43814:SF1">
    <property type="entry name" value="ARGININOSUCCINATE LYASE"/>
    <property type="match status" value="1"/>
</dbReference>
<dbReference type="Pfam" id="PF14698">
    <property type="entry name" value="ASL_C2"/>
    <property type="match status" value="1"/>
</dbReference>
<dbReference type="Pfam" id="PF00206">
    <property type="entry name" value="Lyase_1"/>
    <property type="match status" value="1"/>
</dbReference>
<dbReference type="PRINTS" id="PR00145">
    <property type="entry name" value="ARGSUCLYASE"/>
</dbReference>
<dbReference type="PRINTS" id="PR00149">
    <property type="entry name" value="FUMRATELYASE"/>
</dbReference>
<dbReference type="SUPFAM" id="SSF48557">
    <property type="entry name" value="L-aspartase-like"/>
    <property type="match status" value="1"/>
</dbReference>
<dbReference type="PROSITE" id="PS00163">
    <property type="entry name" value="FUMARATE_LYASES"/>
    <property type="match status" value="1"/>
</dbReference>
<gene>
    <name evidence="1" type="primary">argH</name>
    <name type="ordered locus">Pnuc_0655</name>
</gene>
<organism>
    <name type="scientific">Polynucleobacter asymbioticus (strain DSM 18221 / CIP 109841 / QLW-P1DMWA-1)</name>
    <name type="common">Polynucleobacter necessarius subsp. asymbioticus</name>
    <dbReference type="NCBI Taxonomy" id="312153"/>
    <lineage>
        <taxon>Bacteria</taxon>
        <taxon>Pseudomonadati</taxon>
        <taxon>Pseudomonadota</taxon>
        <taxon>Betaproteobacteria</taxon>
        <taxon>Burkholderiales</taxon>
        <taxon>Burkholderiaceae</taxon>
        <taxon>Polynucleobacter</taxon>
    </lineage>
</organism>
<protein>
    <recommendedName>
        <fullName evidence="1">Argininosuccinate lyase</fullName>
        <shortName evidence="1">ASAL</shortName>
        <ecNumber evidence="1">4.3.2.1</ecNumber>
    </recommendedName>
    <alternativeName>
        <fullName evidence="1">Arginosuccinase</fullName>
    </alternativeName>
</protein>
<feature type="chain" id="PRO_0000335830" description="Argininosuccinate lyase">
    <location>
        <begin position="1"/>
        <end position="472"/>
    </location>
</feature>
<evidence type="ECO:0000255" key="1">
    <source>
        <dbReference type="HAMAP-Rule" id="MF_00006"/>
    </source>
</evidence>
<proteinExistence type="inferred from homology"/>
<keyword id="KW-0028">Amino-acid biosynthesis</keyword>
<keyword id="KW-0055">Arginine biosynthesis</keyword>
<keyword id="KW-0963">Cytoplasm</keyword>
<keyword id="KW-0456">Lyase</keyword>
<keyword id="KW-1185">Reference proteome</keyword>
<comment type="catalytic activity">
    <reaction evidence="1">
        <text>2-(N(omega)-L-arginino)succinate = fumarate + L-arginine</text>
        <dbReference type="Rhea" id="RHEA:24020"/>
        <dbReference type="ChEBI" id="CHEBI:29806"/>
        <dbReference type="ChEBI" id="CHEBI:32682"/>
        <dbReference type="ChEBI" id="CHEBI:57472"/>
        <dbReference type="EC" id="4.3.2.1"/>
    </reaction>
</comment>
<comment type="pathway">
    <text evidence="1">Amino-acid biosynthesis; L-arginine biosynthesis; L-arginine from L-ornithine and carbamoyl phosphate: step 3/3.</text>
</comment>
<comment type="subcellular location">
    <subcellularLocation>
        <location evidence="1">Cytoplasm</location>
    </subcellularLocation>
</comment>
<comment type="similarity">
    <text evidence="1">Belongs to the lyase 1 family. Argininosuccinate lyase subfamily.</text>
</comment>
<accession>A4SWK9</accession>
<reference key="1">
    <citation type="journal article" date="2012" name="Stand. Genomic Sci.">
        <title>Complete genome sequence of Polynucleobacter necessarius subsp. asymbioticus type strain (QLW-P1DMWA-1(T)).</title>
        <authorList>
            <person name="Meincke L."/>
            <person name="Copeland A."/>
            <person name="Lapidus A."/>
            <person name="Lucas S."/>
            <person name="Berry K.W."/>
            <person name="Del Rio T.G."/>
            <person name="Hammon N."/>
            <person name="Dalin E."/>
            <person name="Tice H."/>
            <person name="Pitluck S."/>
            <person name="Richardson P."/>
            <person name="Bruce D."/>
            <person name="Goodwin L."/>
            <person name="Han C."/>
            <person name="Tapia R."/>
            <person name="Detter J.C."/>
            <person name="Schmutz J."/>
            <person name="Brettin T."/>
            <person name="Larimer F."/>
            <person name="Land M."/>
            <person name="Hauser L."/>
            <person name="Kyrpides N.C."/>
            <person name="Ivanova N."/>
            <person name="Goker M."/>
            <person name="Woyke T."/>
            <person name="Wu Q.L."/>
            <person name="Pockl M."/>
            <person name="Hahn M.W."/>
            <person name="Klenk H.P."/>
        </authorList>
    </citation>
    <scope>NUCLEOTIDE SEQUENCE [LARGE SCALE GENOMIC DNA]</scope>
    <source>
        <strain>DSM 18221 / CIP 109841 / QLW-P1DMWA-1</strain>
    </source>
</reference>